<protein>
    <recommendedName>
        <fullName evidence="1">Na(+)/H(+) antiporter NhaA</fullName>
    </recommendedName>
    <alternativeName>
        <fullName evidence="1">Sodium/proton antiporter NhaA</fullName>
    </alternativeName>
</protein>
<dbReference type="EMBL" id="CP000383">
    <property type="protein sequence ID" value="ABG59142.1"/>
    <property type="molecule type" value="Genomic_DNA"/>
</dbReference>
<dbReference type="RefSeq" id="WP_011585259.1">
    <property type="nucleotide sequence ID" value="NC_008255.1"/>
</dbReference>
<dbReference type="SMR" id="Q11TX2"/>
<dbReference type="STRING" id="269798.CHU_1876"/>
<dbReference type="KEGG" id="chu:CHU_1876"/>
<dbReference type="eggNOG" id="COG3004">
    <property type="taxonomic scope" value="Bacteria"/>
</dbReference>
<dbReference type="HOGENOM" id="CLU_015803_1_0_10"/>
<dbReference type="OrthoDB" id="9808135at2"/>
<dbReference type="Proteomes" id="UP000001822">
    <property type="component" value="Chromosome"/>
</dbReference>
<dbReference type="GO" id="GO:0005886">
    <property type="term" value="C:plasma membrane"/>
    <property type="evidence" value="ECO:0007669"/>
    <property type="project" value="UniProtKB-SubCell"/>
</dbReference>
<dbReference type="GO" id="GO:0015385">
    <property type="term" value="F:sodium:proton antiporter activity"/>
    <property type="evidence" value="ECO:0007669"/>
    <property type="project" value="TreeGrafter"/>
</dbReference>
<dbReference type="GO" id="GO:0006885">
    <property type="term" value="P:regulation of pH"/>
    <property type="evidence" value="ECO:0007669"/>
    <property type="project" value="InterPro"/>
</dbReference>
<dbReference type="Gene3D" id="1.20.1530.10">
    <property type="entry name" value="Na+/H+ antiporter like domain"/>
    <property type="match status" value="1"/>
</dbReference>
<dbReference type="HAMAP" id="MF_01844">
    <property type="entry name" value="NhaA"/>
    <property type="match status" value="1"/>
</dbReference>
<dbReference type="InterPro" id="IPR023171">
    <property type="entry name" value="Na/H_antiporter_dom_sf"/>
</dbReference>
<dbReference type="InterPro" id="IPR004670">
    <property type="entry name" value="NhaA"/>
</dbReference>
<dbReference type="NCBIfam" id="TIGR00773">
    <property type="entry name" value="NhaA"/>
    <property type="match status" value="1"/>
</dbReference>
<dbReference type="NCBIfam" id="NF007111">
    <property type="entry name" value="PRK09560.1"/>
    <property type="match status" value="1"/>
</dbReference>
<dbReference type="PANTHER" id="PTHR30341:SF0">
    <property type="entry name" value="NA(+)_H(+) ANTIPORTER NHAA"/>
    <property type="match status" value="1"/>
</dbReference>
<dbReference type="PANTHER" id="PTHR30341">
    <property type="entry name" value="SODIUM ION/PROTON ANTIPORTER NHAA-RELATED"/>
    <property type="match status" value="1"/>
</dbReference>
<dbReference type="Pfam" id="PF06965">
    <property type="entry name" value="Na_H_antiport_1"/>
    <property type="match status" value="1"/>
</dbReference>
<sequence length="387" mass="41859">MKVTQMYKNFLENEKAGGVVLIIATIVSLLVANSSIGHSYIGFWEMFVGGHTIEHYVNDGLMTIFFLLIGLELEREVYAGELSNFKKALLPIIAALGGMIVPACIHMFFNTGTPFQSGSGIPMATDIAFAVGILSLLGNKVPLSLKVFLTALAVIDDLGAIFTIAIFYSRGIDVMYLAGAAGIWAVLFILNRRNVNILWPYLLGGIVMWYFMLHSGVHATITGVILAFVIPFGKGDPDSISIKLQHWLHKPVAFIILPIFALANTCIIIDSDWSASLMSTNSIGIFLGLVVGKPLGITLFCAIAVWLGICSIPNDLKWMQVIGVACLGGIGFTMSIFITLLAFDDHAVISGSKIAIMLSSVTAALIGLLWLKMTLKEPLSNELTEEI</sequence>
<name>NHAA_CYTH3</name>
<proteinExistence type="inferred from homology"/>
<feature type="chain" id="PRO_0000334271" description="Na(+)/H(+) antiporter NhaA">
    <location>
        <begin position="1"/>
        <end position="387"/>
    </location>
</feature>
<feature type="transmembrane region" description="Helical" evidence="1">
    <location>
        <begin position="16"/>
        <end position="36"/>
    </location>
</feature>
<feature type="transmembrane region" description="Helical" evidence="1">
    <location>
        <begin position="53"/>
        <end position="73"/>
    </location>
</feature>
<feature type="transmembrane region" description="Helical" evidence="1">
    <location>
        <begin position="89"/>
        <end position="109"/>
    </location>
</feature>
<feature type="transmembrane region" description="Helical" evidence="1">
    <location>
        <begin position="118"/>
        <end position="138"/>
    </location>
</feature>
<feature type="transmembrane region" description="Helical" evidence="1">
    <location>
        <begin position="147"/>
        <end position="167"/>
    </location>
</feature>
<feature type="transmembrane region" description="Helical" evidence="1">
    <location>
        <begin position="171"/>
        <end position="191"/>
    </location>
</feature>
<feature type="transmembrane region" description="Helical" evidence="1">
    <location>
        <begin position="197"/>
        <end position="217"/>
    </location>
</feature>
<feature type="transmembrane region" description="Helical" evidence="1">
    <location>
        <begin position="220"/>
        <end position="240"/>
    </location>
</feature>
<feature type="transmembrane region" description="Helical" evidence="1">
    <location>
        <begin position="251"/>
        <end position="271"/>
    </location>
</feature>
<feature type="transmembrane region" description="Helical" evidence="1">
    <location>
        <begin position="283"/>
        <end position="303"/>
    </location>
</feature>
<feature type="transmembrane region" description="Helical" evidence="1">
    <location>
        <begin position="321"/>
        <end position="341"/>
    </location>
</feature>
<feature type="transmembrane region" description="Helical" evidence="1">
    <location>
        <begin position="354"/>
        <end position="374"/>
    </location>
</feature>
<reference key="1">
    <citation type="journal article" date="2007" name="Appl. Environ. Microbiol.">
        <title>Genome sequence of the cellulolytic gliding bacterium Cytophaga hutchinsonii.</title>
        <authorList>
            <person name="Xie G."/>
            <person name="Bruce D.C."/>
            <person name="Challacombe J.F."/>
            <person name="Chertkov O."/>
            <person name="Detter J.C."/>
            <person name="Gilna P."/>
            <person name="Han C.S."/>
            <person name="Lucas S."/>
            <person name="Misra M."/>
            <person name="Myers G.L."/>
            <person name="Richardson P."/>
            <person name="Tapia R."/>
            <person name="Thayer N."/>
            <person name="Thompson L.S."/>
            <person name="Brettin T.S."/>
            <person name="Henrissat B."/>
            <person name="Wilson D.B."/>
            <person name="McBride M.J."/>
        </authorList>
    </citation>
    <scope>NUCLEOTIDE SEQUENCE [LARGE SCALE GENOMIC DNA]</scope>
    <source>
        <strain>ATCC 33406 / DSM 1761 / JCM 20678 / CIP 103989 / IAM 12607 / NBRC 15051 / NCIMB 9469 / D465</strain>
    </source>
</reference>
<evidence type="ECO:0000255" key="1">
    <source>
        <dbReference type="HAMAP-Rule" id="MF_01844"/>
    </source>
</evidence>
<comment type="function">
    <text evidence="1">Na(+)/H(+) antiporter that extrudes sodium in exchange for external protons.</text>
</comment>
<comment type="catalytic activity">
    <reaction evidence="1">
        <text>Na(+)(in) + 2 H(+)(out) = Na(+)(out) + 2 H(+)(in)</text>
        <dbReference type="Rhea" id="RHEA:29251"/>
        <dbReference type="ChEBI" id="CHEBI:15378"/>
        <dbReference type="ChEBI" id="CHEBI:29101"/>
    </reaction>
    <physiologicalReaction direction="left-to-right" evidence="1">
        <dbReference type="Rhea" id="RHEA:29252"/>
    </physiologicalReaction>
</comment>
<comment type="subcellular location">
    <subcellularLocation>
        <location evidence="1">Cell inner membrane</location>
        <topology evidence="1">Multi-pass membrane protein</topology>
    </subcellularLocation>
</comment>
<comment type="similarity">
    <text evidence="1">Belongs to the NhaA Na(+)/H(+) (TC 2.A.33) antiporter family.</text>
</comment>
<organism>
    <name type="scientific">Cytophaga hutchinsonii (strain ATCC 33406 / DSM 1761 / CIP 103989 / NBRC 15051 / NCIMB 9469 / D465)</name>
    <dbReference type="NCBI Taxonomy" id="269798"/>
    <lineage>
        <taxon>Bacteria</taxon>
        <taxon>Pseudomonadati</taxon>
        <taxon>Bacteroidota</taxon>
        <taxon>Cytophagia</taxon>
        <taxon>Cytophagales</taxon>
        <taxon>Cytophagaceae</taxon>
        <taxon>Cytophaga</taxon>
    </lineage>
</organism>
<gene>
    <name evidence="1" type="primary">nhaA</name>
    <name type="ordered locus">CHU_1876</name>
</gene>
<keyword id="KW-0050">Antiport</keyword>
<keyword id="KW-0997">Cell inner membrane</keyword>
<keyword id="KW-1003">Cell membrane</keyword>
<keyword id="KW-0406">Ion transport</keyword>
<keyword id="KW-0472">Membrane</keyword>
<keyword id="KW-1185">Reference proteome</keyword>
<keyword id="KW-0915">Sodium</keyword>
<keyword id="KW-0739">Sodium transport</keyword>
<keyword id="KW-0812">Transmembrane</keyword>
<keyword id="KW-1133">Transmembrane helix</keyword>
<keyword id="KW-0813">Transport</keyword>
<accession>Q11TX2</accession>